<gene>
    <name type="primary">argS</name>
    <name type="ordered locus">b1876</name>
    <name type="ordered locus">JW1865</name>
</gene>
<evidence type="ECO:0000305" key="1"/>
<evidence type="ECO:0007829" key="2">
    <source>
        <dbReference type="PDB" id="4OBY"/>
    </source>
</evidence>
<evidence type="ECO:0007829" key="3">
    <source>
        <dbReference type="PDB" id="5B63"/>
    </source>
</evidence>
<evidence type="ECO:0007829" key="4">
    <source>
        <dbReference type="PDB" id="5YYM"/>
    </source>
</evidence>
<organism>
    <name type="scientific">Escherichia coli (strain K12)</name>
    <dbReference type="NCBI Taxonomy" id="83333"/>
    <lineage>
        <taxon>Bacteria</taxon>
        <taxon>Pseudomonadati</taxon>
        <taxon>Pseudomonadota</taxon>
        <taxon>Gammaproteobacteria</taxon>
        <taxon>Enterobacterales</taxon>
        <taxon>Enterobacteriaceae</taxon>
        <taxon>Escherichia</taxon>
    </lineage>
</organism>
<name>SYR_ECOLI</name>
<protein>
    <recommendedName>
        <fullName>Arginine--tRNA ligase</fullName>
        <ecNumber>6.1.1.19</ecNumber>
    </recommendedName>
    <alternativeName>
        <fullName>Arginyl-tRNA synthetase</fullName>
        <shortName>ArgRS</shortName>
    </alternativeName>
</protein>
<feature type="chain" id="PRO_0000151557" description="Arginine--tRNA ligase">
    <location>
        <begin position="1"/>
        <end position="577"/>
    </location>
</feature>
<feature type="short sequence motif" description="'HIGH' region">
    <location>
        <begin position="122"/>
        <end position="132"/>
    </location>
</feature>
<feature type="helix" evidence="4">
    <location>
        <begin position="3"/>
        <end position="17"/>
    </location>
</feature>
<feature type="strand" evidence="4">
    <location>
        <begin position="28"/>
        <end position="30"/>
    </location>
</feature>
<feature type="strand" evidence="4">
    <location>
        <begin position="32"/>
        <end position="34"/>
    </location>
</feature>
<feature type="strand" evidence="4">
    <location>
        <begin position="38"/>
        <end position="41"/>
    </location>
</feature>
<feature type="helix" evidence="4">
    <location>
        <begin position="44"/>
        <end position="51"/>
    </location>
</feature>
<feature type="helix" evidence="4">
    <location>
        <begin position="55"/>
        <end position="65"/>
    </location>
</feature>
<feature type="turn" evidence="4">
    <location>
        <begin position="69"/>
        <end position="71"/>
    </location>
</feature>
<feature type="strand" evidence="4">
    <location>
        <begin position="72"/>
        <end position="78"/>
    </location>
</feature>
<feature type="turn" evidence="4">
    <location>
        <begin position="79"/>
        <end position="81"/>
    </location>
</feature>
<feature type="strand" evidence="4">
    <location>
        <begin position="82"/>
        <end position="87"/>
    </location>
</feature>
<feature type="helix" evidence="4">
    <location>
        <begin position="89"/>
        <end position="101"/>
    </location>
</feature>
<feature type="turn" evidence="4">
    <location>
        <begin position="103"/>
        <end position="106"/>
    </location>
</feature>
<feature type="strand" evidence="4">
    <location>
        <begin position="114"/>
        <end position="118"/>
    </location>
</feature>
<feature type="helix" evidence="4">
    <location>
        <begin position="130"/>
        <end position="132"/>
    </location>
</feature>
<feature type="helix" evidence="4">
    <location>
        <begin position="133"/>
        <end position="148"/>
    </location>
</feature>
<feature type="strand" evidence="4">
    <location>
        <begin position="152"/>
        <end position="157"/>
    </location>
</feature>
<feature type="helix" evidence="4">
    <location>
        <begin position="165"/>
        <end position="177"/>
    </location>
</feature>
<feature type="turn" evidence="4">
    <location>
        <begin position="178"/>
        <end position="180"/>
    </location>
</feature>
<feature type="helix" evidence="4">
    <location>
        <begin position="189"/>
        <end position="200"/>
    </location>
</feature>
<feature type="helix" evidence="4">
    <location>
        <begin position="204"/>
        <end position="219"/>
    </location>
</feature>
<feature type="helix" evidence="4">
    <location>
        <begin position="222"/>
        <end position="245"/>
    </location>
</feature>
<feature type="helix" evidence="4">
    <location>
        <begin position="252"/>
        <end position="254"/>
    </location>
</feature>
<feature type="helix" evidence="4">
    <location>
        <begin position="258"/>
        <end position="264"/>
    </location>
</feature>
<feature type="helix" evidence="4">
    <location>
        <begin position="265"/>
        <end position="274"/>
    </location>
</feature>
<feature type="strand" evidence="4">
    <location>
        <begin position="278"/>
        <end position="281"/>
    </location>
</feature>
<feature type="strand" evidence="4">
    <location>
        <begin position="284"/>
        <end position="293"/>
    </location>
</feature>
<feature type="strand" evidence="4">
    <location>
        <begin position="297"/>
        <end position="305"/>
    </location>
</feature>
<feature type="helix" evidence="4">
    <location>
        <begin position="313"/>
        <end position="326"/>
    </location>
</feature>
<feature type="strand" evidence="4">
    <location>
        <begin position="331"/>
        <end position="335"/>
    </location>
</feature>
<feature type="helix" evidence="4">
    <location>
        <begin position="339"/>
        <end position="341"/>
    </location>
</feature>
<feature type="helix" evidence="4">
    <location>
        <begin position="342"/>
        <end position="355"/>
    </location>
</feature>
<feature type="strand" evidence="2">
    <location>
        <begin position="360"/>
        <end position="362"/>
    </location>
</feature>
<feature type="strand" evidence="4">
    <location>
        <begin position="364"/>
        <end position="366"/>
    </location>
</feature>
<feature type="strand" evidence="4">
    <location>
        <begin position="377"/>
        <end position="379"/>
    </location>
</feature>
<feature type="strand" evidence="4">
    <location>
        <begin position="383"/>
        <end position="385"/>
    </location>
</feature>
<feature type="helix" evidence="4">
    <location>
        <begin position="390"/>
        <end position="407"/>
    </location>
</feature>
<feature type="helix" evidence="4">
    <location>
        <begin position="414"/>
        <end position="434"/>
    </location>
</feature>
<feature type="helix" evidence="4">
    <location>
        <begin position="446"/>
        <end position="449"/>
    </location>
</feature>
<feature type="strand" evidence="4">
    <location>
        <begin position="452"/>
        <end position="456"/>
    </location>
</feature>
<feature type="helix" evidence="4">
    <location>
        <begin position="457"/>
        <end position="470"/>
    </location>
</feature>
<feature type="helix" evidence="4">
    <location>
        <begin position="473"/>
        <end position="475"/>
    </location>
</feature>
<feature type="helix" evidence="4">
    <location>
        <begin position="478"/>
        <end position="483"/>
    </location>
</feature>
<feature type="helix" evidence="4">
    <location>
        <begin position="491"/>
        <end position="500"/>
    </location>
</feature>
<feature type="helix" evidence="4">
    <location>
        <begin position="503"/>
        <end position="513"/>
    </location>
</feature>
<feature type="helix" evidence="4">
    <location>
        <begin position="517"/>
        <end position="536"/>
    </location>
</feature>
<feature type="strand" evidence="3">
    <location>
        <begin position="539"/>
        <end position="541"/>
    </location>
</feature>
<feature type="helix" evidence="4">
    <location>
        <begin position="545"/>
        <end position="568"/>
    </location>
</feature>
<proteinExistence type="evidence at protein level"/>
<keyword id="KW-0002">3D-structure</keyword>
<keyword id="KW-0030">Aminoacyl-tRNA synthetase</keyword>
<keyword id="KW-0067">ATP-binding</keyword>
<keyword id="KW-0963">Cytoplasm</keyword>
<keyword id="KW-0903">Direct protein sequencing</keyword>
<keyword id="KW-0436">Ligase</keyword>
<keyword id="KW-0547">Nucleotide-binding</keyword>
<keyword id="KW-0648">Protein biosynthesis</keyword>
<keyword id="KW-1185">Reference proteome</keyword>
<dbReference type="EC" id="6.1.1.19"/>
<dbReference type="EMBL" id="X15320">
    <property type="protein sequence ID" value="CAA33384.1"/>
    <property type="molecule type" value="Genomic_DNA"/>
</dbReference>
<dbReference type="EMBL" id="U00096">
    <property type="protein sequence ID" value="AAC74946.1"/>
    <property type="molecule type" value="Genomic_DNA"/>
</dbReference>
<dbReference type="EMBL" id="AP009048">
    <property type="protein sequence ID" value="BAA15686.1"/>
    <property type="molecule type" value="Genomic_DNA"/>
</dbReference>
<dbReference type="PIR" id="JS0267">
    <property type="entry name" value="SYECRT"/>
</dbReference>
<dbReference type="RefSeq" id="NP_416390.1">
    <property type="nucleotide sequence ID" value="NC_000913.3"/>
</dbReference>
<dbReference type="RefSeq" id="WP_001025322.1">
    <property type="nucleotide sequence ID" value="NZ_SSZK01000001.1"/>
</dbReference>
<dbReference type="PDB" id="4OBY">
    <property type="method" value="X-ray"/>
    <property type="resolution" value="2.57 A"/>
    <property type="chains" value="A=1-577"/>
</dbReference>
<dbReference type="PDB" id="5B63">
    <property type="method" value="X-ray"/>
    <property type="resolution" value="3.00 A"/>
    <property type="chains" value="A/C=1-577"/>
</dbReference>
<dbReference type="PDB" id="5YYM">
    <property type="method" value="X-ray"/>
    <property type="resolution" value="2.20 A"/>
    <property type="chains" value="A/B=1-577"/>
</dbReference>
<dbReference type="PDB" id="5YYN">
    <property type="method" value="X-ray"/>
    <property type="resolution" value="3.00 A"/>
    <property type="chains" value="A/C=1-577"/>
</dbReference>
<dbReference type="PDBsum" id="4OBY"/>
<dbReference type="PDBsum" id="5B63"/>
<dbReference type="PDBsum" id="5YYM"/>
<dbReference type="PDBsum" id="5YYN"/>
<dbReference type="SMR" id="P11875"/>
<dbReference type="BioGRID" id="4260368">
    <property type="interactions" value="50"/>
</dbReference>
<dbReference type="DIP" id="DIP-9147N"/>
<dbReference type="FunCoup" id="P11875">
    <property type="interactions" value="783"/>
</dbReference>
<dbReference type="IntAct" id="P11875">
    <property type="interactions" value="10"/>
</dbReference>
<dbReference type="STRING" id="511145.b1876"/>
<dbReference type="jPOST" id="P11875"/>
<dbReference type="PaxDb" id="511145-b1876"/>
<dbReference type="EnsemblBacteria" id="AAC74946">
    <property type="protein sequence ID" value="AAC74946"/>
    <property type="gene ID" value="b1876"/>
</dbReference>
<dbReference type="GeneID" id="75171948"/>
<dbReference type="GeneID" id="946452"/>
<dbReference type="KEGG" id="ecj:JW1865"/>
<dbReference type="KEGG" id="eco:b1876"/>
<dbReference type="KEGG" id="ecoc:C3026_10675"/>
<dbReference type="PATRIC" id="fig|1411691.4.peg.372"/>
<dbReference type="EchoBASE" id="EB0069"/>
<dbReference type="eggNOG" id="COG0018">
    <property type="taxonomic scope" value="Bacteria"/>
</dbReference>
<dbReference type="HOGENOM" id="CLU_006406_5_1_6"/>
<dbReference type="InParanoid" id="P11875"/>
<dbReference type="OMA" id="NKPLHLG"/>
<dbReference type="OrthoDB" id="9803211at2"/>
<dbReference type="PhylomeDB" id="P11875"/>
<dbReference type="BioCyc" id="EcoCyc:ARGS-MONOMER"/>
<dbReference type="BioCyc" id="MetaCyc:ARGS-MONOMER"/>
<dbReference type="BRENDA" id="6.1.1.19">
    <property type="organism ID" value="2026"/>
</dbReference>
<dbReference type="SABIO-RK" id="P11875"/>
<dbReference type="EvolutionaryTrace" id="P11875"/>
<dbReference type="PRO" id="PR:P11875"/>
<dbReference type="Proteomes" id="UP000000625">
    <property type="component" value="Chromosome"/>
</dbReference>
<dbReference type="GO" id="GO:0005829">
    <property type="term" value="C:cytosol"/>
    <property type="evidence" value="ECO:0000314"/>
    <property type="project" value="EcoCyc"/>
</dbReference>
<dbReference type="GO" id="GO:0004814">
    <property type="term" value="F:arginine-tRNA ligase activity"/>
    <property type="evidence" value="ECO:0000314"/>
    <property type="project" value="EcoCyc"/>
</dbReference>
<dbReference type="GO" id="GO:0005524">
    <property type="term" value="F:ATP binding"/>
    <property type="evidence" value="ECO:0007669"/>
    <property type="project" value="UniProtKB-UniRule"/>
</dbReference>
<dbReference type="GO" id="GO:0006420">
    <property type="term" value="P:arginyl-tRNA aminoacylation"/>
    <property type="evidence" value="ECO:0000314"/>
    <property type="project" value="EcoCyc"/>
</dbReference>
<dbReference type="CDD" id="cd07956">
    <property type="entry name" value="Anticodon_Ia_Arg"/>
    <property type="match status" value="1"/>
</dbReference>
<dbReference type="CDD" id="cd00671">
    <property type="entry name" value="ArgRS_core"/>
    <property type="match status" value="1"/>
</dbReference>
<dbReference type="FunFam" id="1.10.730.10:FF:000001">
    <property type="entry name" value="Arginine--tRNA ligase"/>
    <property type="match status" value="1"/>
</dbReference>
<dbReference type="FunFam" id="3.30.1360.70:FF:000001">
    <property type="entry name" value="Arginine--tRNA ligase"/>
    <property type="match status" value="1"/>
</dbReference>
<dbReference type="FunFam" id="3.40.50.620:FF:000030">
    <property type="entry name" value="Arginine--tRNA ligase"/>
    <property type="match status" value="1"/>
</dbReference>
<dbReference type="Gene3D" id="3.30.1360.70">
    <property type="entry name" value="Arginyl tRNA synthetase N-terminal domain"/>
    <property type="match status" value="1"/>
</dbReference>
<dbReference type="Gene3D" id="3.40.50.620">
    <property type="entry name" value="HUPs"/>
    <property type="match status" value="1"/>
</dbReference>
<dbReference type="Gene3D" id="1.10.730.10">
    <property type="entry name" value="Isoleucyl-tRNA Synthetase, Domain 1"/>
    <property type="match status" value="1"/>
</dbReference>
<dbReference type="HAMAP" id="MF_00123">
    <property type="entry name" value="Arg_tRNA_synth"/>
    <property type="match status" value="1"/>
</dbReference>
<dbReference type="InterPro" id="IPR001412">
    <property type="entry name" value="aa-tRNA-synth_I_CS"/>
</dbReference>
<dbReference type="InterPro" id="IPR001278">
    <property type="entry name" value="Arg-tRNA-ligase"/>
</dbReference>
<dbReference type="InterPro" id="IPR005148">
    <property type="entry name" value="Arg-tRNA-synth_N"/>
</dbReference>
<dbReference type="InterPro" id="IPR036695">
    <property type="entry name" value="Arg-tRNA-synth_N_sf"/>
</dbReference>
<dbReference type="InterPro" id="IPR035684">
    <property type="entry name" value="ArgRS_core"/>
</dbReference>
<dbReference type="InterPro" id="IPR008909">
    <property type="entry name" value="DALR_anticod-bd"/>
</dbReference>
<dbReference type="InterPro" id="IPR014729">
    <property type="entry name" value="Rossmann-like_a/b/a_fold"/>
</dbReference>
<dbReference type="InterPro" id="IPR009080">
    <property type="entry name" value="tRNAsynth_Ia_anticodon-bd"/>
</dbReference>
<dbReference type="NCBIfam" id="TIGR00456">
    <property type="entry name" value="argS"/>
    <property type="match status" value="1"/>
</dbReference>
<dbReference type="PANTHER" id="PTHR11956:SF5">
    <property type="entry name" value="ARGININE--TRNA LIGASE, CYTOPLASMIC"/>
    <property type="match status" value="1"/>
</dbReference>
<dbReference type="PANTHER" id="PTHR11956">
    <property type="entry name" value="ARGINYL-TRNA SYNTHETASE"/>
    <property type="match status" value="1"/>
</dbReference>
<dbReference type="Pfam" id="PF03485">
    <property type="entry name" value="Arg_tRNA_synt_N"/>
    <property type="match status" value="1"/>
</dbReference>
<dbReference type="Pfam" id="PF05746">
    <property type="entry name" value="DALR_1"/>
    <property type="match status" value="1"/>
</dbReference>
<dbReference type="Pfam" id="PF00750">
    <property type="entry name" value="tRNA-synt_1d"/>
    <property type="match status" value="1"/>
</dbReference>
<dbReference type="PRINTS" id="PR01038">
    <property type="entry name" value="TRNASYNTHARG"/>
</dbReference>
<dbReference type="SMART" id="SM01016">
    <property type="entry name" value="Arg_tRNA_synt_N"/>
    <property type="match status" value="1"/>
</dbReference>
<dbReference type="SMART" id="SM00836">
    <property type="entry name" value="DALR_1"/>
    <property type="match status" value="1"/>
</dbReference>
<dbReference type="SUPFAM" id="SSF47323">
    <property type="entry name" value="Anticodon-binding domain of a subclass of class I aminoacyl-tRNA synthetases"/>
    <property type="match status" value="1"/>
</dbReference>
<dbReference type="SUPFAM" id="SSF55190">
    <property type="entry name" value="Arginyl-tRNA synthetase (ArgRS), N-terminal 'additional' domain"/>
    <property type="match status" value="1"/>
</dbReference>
<dbReference type="SUPFAM" id="SSF52374">
    <property type="entry name" value="Nucleotidylyl transferase"/>
    <property type="match status" value="1"/>
</dbReference>
<dbReference type="PROSITE" id="PS00178">
    <property type="entry name" value="AA_TRNA_LIGASE_I"/>
    <property type="match status" value="1"/>
</dbReference>
<sequence>MNIQALLSEKVRQAMIAAGAPADCEPQVRQSAKVQFGDYQANGMMAVAKKLGMAPRQLAEQVLTHLDLNGIASKVEIAGPGFINIFLDPAFLAEHVQQALASDRLGVATPEKQTIVVDYSAPNVAKEMHVGHLRSTIIGDAAVRTLEFLGHKVIRANHVGDWGTQFGMLIAWLEKQQQENAGEMELADLEGFYRDAKKHYDEDEEFAERARNYVVKLQSGDEYFREMWRKLVDITMTQNQITYDRLNVTLTRDDVMGESLYNPMLPGIVADLKAKGLAVESEGATVVFLDEFKNKEGEPMGVIIQKKDGGYLYTTTDIACAKYRYETLHADRVLYYIDSRQHQHLMQAWAIVRKAGYVPESVPLEHHMFGMMLGKDGKPFKTRAGGTVKLADLLDEALERARRLVAEKNPDMPADELEKLANAVGIGAVKYADLSKNRTTDYIFDWDNMLAFEGNTAPYMQYAYTRVLSVFRKAEIDEEQLAAAPVIIREDREAQLAARLLQFEETLTVVAREGTPHVMCAYLYDLAGLFSGFYEHCPILSAENEEVRNSRLKLAQLTAKTLKLGLDTLGIETVERM</sequence>
<reference key="1">
    <citation type="journal article" date="1989" name="Nucleic Acids Res.">
        <title>Isolation and characterization of the gene coding for Escherichia coli arginyl-tRNA synthetase.</title>
        <authorList>
            <person name="Eriani G."/>
            <person name="Dirheimer G."/>
            <person name="Gangloff J."/>
        </authorList>
    </citation>
    <scope>NUCLEOTIDE SEQUENCE [GENOMIC DNA]</scope>
    <scope>PROTEIN SEQUENCE OF 1-19</scope>
    <source>
        <strain>K12</strain>
    </source>
</reference>
<reference key="2">
    <citation type="journal article" date="1996" name="DNA Res.">
        <title>A 460-kb DNA sequence of the Escherichia coli K-12 genome corresponding to the 40.1-50.0 min region on the linkage map.</title>
        <authorList>
            <person name="Itoh T."/>
            <person name="Aiba H."/>
            <person name="Baba T."/>
            <person name="Fujita K."/>
            <person name="Hayashi K."/>
            <person name="Inada T."/>
            <person name="Isono K."/>
            <person name="Kasai H."/>
            <person name="Kimura S."/>
            <person name="Kitakawa M."/>
            <person name="Kitagawa M."/>
            <person name="Makino K."/>
            <person name="Miki T."/>
            <person name="Mizobuchi K."/>
            <person name="Mori H."/>
            <person name="Mori T."/>
            <person name="Motomura K."/>
            <person name="Nakade S."/>
            <person name="Nakamura Y."/>
            <person name="Nashimoto H."/>
            <person name="Nishio Y."/>
            <person name="Oshima T."/>
            <person name="Saito N."/>
            <person name="Sampei G."/>
            <person name="Seki Y."/>
            <person name="Sivasundaram S."/>
            <person name="Tagami H."/>
            <person name="Takeda J."/>
            <person name="Takemoto K."/>
            <person name="Wada C."/>
            <person name="Yamamoto Y."/>
            <person name="Horiuchi T."/>
        </authorList>
    </citation>
    <scope>NUCLEOTIDE SEQUENCE [LARGE SCALE GENOMIC DNA]</scope>
    <source>
        <strain>K12 / W3110 / ATCC 27325 / DSM 5911</strain>
    </source>
</reference>
<reference key="3">
    <citation type="journal article" date="1997" name="Science">
        <title>The complete genome sequence of Escherichia coli K-12.</title>
        <authorList>
            <person name="Blattner F.R."/>
            <person name="Plunkett G. III"/>
            <person name="Bloch C.A."/>
            <person name="Perna N.T."/>
            <person name="Burland V."/>
            <person name="Riley M."/>
            <person name="Collado-Vides J."/>
            <person name="Glasner J.D."/>
            <person name="Rode C.K."/>
            <person name="Mayhew G.F."/>
            <person name="Gregor J."/>
            <person name="Davis N.W."/>
            <person name="Kirkpatrick H.A."/>
            <person name="Goeden M.A."/>
            <person name="Rose D.J."/>
            <person name="Mau B."/>
            <person name="Shao Y."/>
        </authorList>
    </citation>
    <scope>NUCLEOTIDE SEQUENCE [LARGE SCALE GENOMIC DNA]</scope>
    <source>
        <strain>K12 / MG1655 / ATCC 47076</strain>
    </source>
</reference>
<reference key="4">
    <citation type="journal article" date="2006" name="Mol. Syst. Biol.">
        <title>Highly accurate genome sequences of Escherichia coli K-12 strains MG1655 and W3110.</title>
        <authorList>
            <person name="Hayashi K."/>
            <person name="Morooka N."/>
            <person name="Yamamoto Y."/>
            <person name="Fujita K."/>
            <person name="Isono K."/>
            <person name="Choi S."/>
            <person name="Ohtsubo E."/>
            <person name="Baba T."/>
            <person name="Wanner B.L."/>
            <person name="Mori H."/>
            <person name="Horiuchi T."/>
        </authorList>
    </citation>
    <scope>NUCLEOTIDE SEQUENCE [LARGE SCALE GENOMIC DNA]</scope>
    <source>
        <strain>K12 / W3110 / ATCC 27325 / DSM 5911</strain>
    </source>
</reference>
<reference key="5">
    <citation type="journal article" date="1997" name="Electrophoresis">
        <title>Escherichia coli proteome analysis using the gene-protein database.</title>
        <authorList>
            <person name="VanBogelen R.A."/>
            <person name="Abshire K.Z."/>
            <person name="Moldover B."/>
            <person name="Olson E.R."/>
            <person name="Neidhardt F.C."/>
        </authorList>
    </citation>
    <scope>IDENTIFICATION BY 2D-GEL</scope>
</reference>
<comment type="catalytic activity">
    <reaction>
        <text>tRNA(Arg) + L-arginine + ATP = L-arginyl-tRNA(Arg) + AMP + diphosphate</text>
        <dbReference type="Rhea" id="RHEA:20301"/>
        <dbReference type="Rhea" id="RHEA-COMP:9658"/>
        <dbReference type="Rhea" id="RHEA-COMP:9673"/>
        <dbReference type="ChEBI" id="CHEBI:30616"/>
        <dbReference type="ChEBI" id="CHEBI:32682"/>
        <dbReference type="ChEBI" id="CHEBI:33019"/>
        <dbReference type="ChEBI" id="CHEBI:78442"/>
        <dbReference type="ChEBI" id="CHEBI:78513"/>
        <dbReference type="ChEBI" id="CHEBI:456215"/>
        <dbReference type="EC" id="6.1.1.19"/>
    </reaction>
</comment>
<comment type="subunit">
    <text>Monomer.</text>
</comment>
<comment type="subcellular location">
    <subcellularLocation>
        <location>Cytoplasm</location>
    </subcellularLocation>
</comment>
<comment type="similarity">
    <text evidence="1">Belongs to the class-I aminoacyl-tRNA synthetase family.</text>
</comment>
<accession>P11875</accession>